<evidence type="ECO:0000255" key="1">
    <source>
        <dbReference type="HAMAP-Rule" id="MF_00595"/>
    </source>
</evidence>
<feature type="chain" id="PRO_1000129839" description="Phosphoenolpyruvate carboxylase">
    <location>
        <begin position="1"/>
        <end position="883"/>
    </location>
</feature>
<feature type="active site" evidence="1">
    <location>
        <position position="138"/>
    </location>
</feature>
<feature type="active site" evidence="1">
    <location>
        <position position="546"/>
    </location>
</feature>
<comment type="function">
    <text evidence="1">Forms oxaloacetate, a four-carbon dicarboxylic acid source for the tricarboxylic acid cycle.</text>
</comment>
<comment type="catalytic activity">
    <reaction evidence="1">
        <text>oxaloacetate + phosphate = phosphoenolpyruvate + hydrogencarbonate</text>
        <dbReference type="Rhea" id="RHEA:28370"/>
        <dbReference type="ChEBI" id="CHEBI:16452"/>
        <dbReference type="ChEBI" id="CHEBI:17544"/>
        <dbReference type="ChEBI" id="CHEBI:43474"/>
        <dbReference type="ChEBI" id="CHEBI:58702"/>
        <dbReference type="EC" id="4.1.1.31"/>
    </reaction>
</comment>
<comment type="cofactor">
    <cofactor evidence="1">
        <name>Mg(2+)</name>
        <dbReference type="ChEBI" id="CHEBI:18420"/>
    </cofactor>
</comment>
<comment type="similarity">
    <text evidence="1">Belongs to the PEPCase type 1 family.</text>
</comment>
<reference key="1">
    <citation type="journal article" date="2008" name="Genome Res.">
        <title>Comparative genome analysis of Salmonella enteritidis PT4 and Salmonella gallinarum 287/91 provides insights into evolutionary and host adaptation pathways.</title>
        <authorList>
            <person name="Thomson N.R."/>
            <person name="Clayton D.J."/>
            <person name="Windhorst D."/>
            <person name="Vernikos G."/>
            <person name="Davidson S."/>
            <person name="Churcher C."/>
            <person name="Quail M.A."/>
            <person name="Stevens M."/>
            <person name="Jones M.A."/>
            <person name="Watson M."/>
            <person name="Barron A."/>
            <person name="Layton A."/>
            <person name="Pickard D."/>
            <person name="Kingsley R.A."/>
            <person name="Bignell A."/>
            <person name="Clark L."/>
            <person name="Harris B."/>
            <person name="Ormond D."/>
            <person name="Abdellah Z."/>
            <person name="Brooks K."/>
            <person name="Cherevach I."/>
            <person name="Chillingworth T."/>
            <person name="Woodward J."/>
            <person name="Norberczak H."/>
            <person name="Lord A."/>
            <person name="Arrowsmith C."/>
            <person name="Jagels K."/>
            <person name="Moule S."/>
            <person name="Mungall K."/>
            <person name="Saunders M."/>
            <person name="Whitehead S."/>
            <person name="Chabalgoity J.A."/>
            <person name="Maskell D."/>
            <person name="Humphreys T."/>
            <person name="Roberts M."/>
            <person name="Barrow P.A."/>
            <person name="Dougan G."/>
            <person name="Parkhill J."/>
        </authorList>
    </citation>
    <scope>NUCLEOTIDE SEQUENCE [LARGE SCALE GENOMIC DNA]</scope>
    <source>
        <strain>P125109</strain>
    </source>
</reference>
<sequence length="883" mass="99003">MNEQYSALRSNVSMLGKVLGETIKDALGEHILDRVETIRKLSKSSRAGNEANRQELLTTLQNLSNDELLPVARAFSQFLNLANTAEQYHSISPKGEAASNPEVIARTLRKLKNQPDLNDATIKKAVESLSLELVLTAHPTEITRRTLIHKMGEINNCLKQLDNTDIADYERHQVMRRLRQLIAQSWHTDEIRKQRPSPVDEAKWGFAVVENSLWQGVPNYLRELNEQLEENLGYKLPVDFVPVRFTSWMGGDRDGNPNVTADITRHVLLLSRWKATDLFLKDIHVLVSELSMVDATPELLALVGEEGASEPYRYLMKKLRARLMATQSWLEARLKGEKLPKPAGLLTQNEQLWEPLYACYQSLQACGMGIIANGELLDTLRRVKCFGVPLVRIDIRQESTRHTEALGEITRYLGIGDYESWSEADKQAFLIRELNSKRPLLPRNWEPSNDTREVLETCKVIAEAPKGSIAAYVISMAKTPSDVLAVHLLLKEAGIGFAMPVAPLFETLDDLNNADDVMTQLLNIDWYRGLIQGKQMVMIGYSDSAKDAGVMAASWAQYQAQDALIKTCEKAGIELTLFHGRGGSIGRGGAPAHAALLSQPPGSLKGGLRVTEQGEMIRFKYGLPEVTVSSLSLYTSAILEANLLPPPEPKDSWRHIMDELSVISCETYRGYVRENKDFVPYFRSATPEQELGKLPLGSRPAKRRPTGGVESLRAIPWIFAWTQNRLMLPAWLGAGTALQKVVEDGKQSELEAMCRDWPFFSTRLGMLEMVFSKADLWLADYYDQRLVAKTLWPLGKELRDLLEEDIKVVLAIANDSHLMADLPWIAESIQLRNVYTDPLNVLQAELLYRSRLTEEQGKSPDPRVEQALMVTIAGVAAGMRNTG</sequence>
<protein>
    <recommendedName>
        <fullName evidence="1">Phosphoenolpyruvate carboxylase</fullName>
        <shortName evidence="1">PEPC</shortName>
        <shortName evidence="1">PEPCase</shortName>
        <ecNumber evidence="1">4.1.1.31</ecNumber>
    </recommendedName>
</protein>
<keyword id="KW-0120">Carbon dioxide fixation</keyword>
<keyword id="KW-0456">Lyase</keyword>
<keyword id="KW-0460">Magnesium</keyword>
<proteinExistence type="inferred from homology"/>
<organism>
    <name type="scientific">Salmonella enteritidis PT4 (strain P125109)</name>
    <dbReference type="NCBI Taxonomy" id="550537"/>
    <lineage>
        <taxon>Bacteria</taxon>
        <taxon>Pseudomonadati</taxon>
        <taxon>Pseudomonadota</taxon>
        <taxon>Gammaproteobacteria</taxon>
        <taxon>Enterobacterales</taxon>
        <taxon>Enterobacteriaceae</taxon>
        <taxon>Salmonella</taxon>
    </lineage>
</organism>
<name>CAPP_SALEP</name>
<gene>
    <name evidence="1" type="primary">ppc</name>
    <name type="ordered locus">SEN3914</name>
</gene>
<accession>B5QXQ1</accession>
<dbReference type="EC" id="4.1.1.31" evidence="1"/>
<dbReference type="EMBL" id="AM933172">
    <property type="protein sequence ID" value="CAR35486.1"/>
    <property type="molecule type" value="Genomic_DNA"/>
</dbReference>
<dbReference type="RefSeq" id="WP_001005548.1">
    <property type="nucleotide sequence ID" value="NC_011294.1"/>
</dbReference>
<dbReference type="SMR" id="B5QXQ1"/>
<dbReference type="KEGG" id="set:SEN3914"/>
<dbReference type="HOGENOM" id="CLU_006557_2_0_6"/>
<dbReference type="Proteomes" id="UP000000613">
    <property type="component" value="Chromosome"/>
</dbReference>
<dbReference type="GO" id="GO:0005829">
    <property type="term" value="C:cytosol"/>
    <property type="evidence" value="ECO:0007669"/>
    <property type="project" value="TreeGrafter"/>
</dbReference>
<dbReference type="GO" id="GO:0000287">
    <property type="term" value="F:magnesium ion binding"/>
    <property type="evidence" value="ECO:0007669"/>
    <property type="project" value="UniProtKB-UniRule"/>
</dbReference>
<dbReference type="GO" id="GO:0008964">
    <property type="term" value="F:phosphoenolpyruvate carboxylase activity"/>
    <property type="evidence" value="ECO:0007669"/>
    <property type="project" value="UniProtKB-UniRule"/>
</dbReference>
<dbReference type="GO" id="GO:0015977">
    <property type="term" value="P:carbon fixation"/>
    <property type="evidence" value="ECO:0007669"/>
    <property type="project" value="UniProtKB-UniRule"/>
</dbReference>
<dbReference type="GO" id="GO:0006107">
    <property type="term" value="P:oxaloacetate metabolic process"/>
    <property type="evidence" value="ECO:0007669"/>
    <property type="project" value="UniProtKB-UniRule"/>
</dbReference>
<dbReference type="GO" id="GO:0006099">
    <property type="term" value="P:tricarboxylic acid cycle"/>
    <property type="evidence" value="ECO:0007669"/>
    <property type="project" value="InterPro"/>
</dbReference>
<dbReference type="FunFam" id="1.20.1440.90:FF:000002">
    <property type="entry name" value="Phosphoenolpyruvate carboxylase"/>
    <property type="match status" value="1"/>
</dbReference>
<dbReference type="Gene3D" id="1.20.1440.90">
    <property type="entry name" value="Phosphoenolpyruvate/pyruvate domain"/>
    <property type="match status" value="1"/>
</dbReference>
<dbReference type="HAMAP" id="MF_00595">
    <property type="entry name" value="PEPcase_type1"/>
    <property type="match status" value="1"/>
</dbReference>
<dbReference type="InterPro" id="IPR021135">
    <property type="entry name" value="PEP_COase"/>
</dbReference>
<dbReference type="InterPro" id="IPR022805">
    <property type="entry name" value="PEP_COase_bac/pln-type"/>
</dbReference>
<dbReference type="InterPro" id="IPR018129">
    <property type="entry name" value="PEP_COase_Lys_AS"/>
</dbReference>
<dbReference type="InterPro" id="IPR033129">
    <property type="entry name" value="PEPCASE_His_AS"/>
</dbReference>
<dbReference type="InterPro" id="IPR015813">
    <property type="entry name" value="Pyrv/PenolPyrv_kinase-like_dom"/>
</dbReference>
<dbReference type="NCBIfam" id="NF000584">
    <property type="entry name" value="PRK00009.1"/>
    <property type="match status" value="1"/>
</dbReference>
<dbReference type="PANTHER" id="PTHR30523">
    <property type="entry name" value="PHOSPHOENOLPYRUVATE CARBOXYLASE"/>
    <property type="match status" value="1"/>
</dbReference>
<dbReference type="PANTHER" id="PTHR30523:SF6">
    <property type="entry name" value="PHOSPHOENOLPYRUVATE CARBOXYLASE"/>
    <property type="match status" value="1"/>
</dbReference>
<dbReference type="Pfam" id="PF00311">
    <property type="entry name" value="PEPcase"/>
    <property type="match status" value="1"/>
</dbReference>
<dbReference type="PRINTS" id="PR00150">
    <property type="entry name" value="PEPCARBXLASE"/>
</dbReference>
<dbReference type="SUPFAM" id="SSF51621">
    <property type="entry name" value="Phosphoenolpyruvate/pyruvate domain"/>
    <property type="match status" value="1"/>
</dbReference>
<dbReference type="PROSITE" id="PS00781">
    <property type="entry name" value="PEPCASE_1"/>
    <property type="match status" value="1"/>
</dbReference>
<dbReference type="PROSITE" id="PS00393">
    <property type="entry name" value="PEPCASE_2"/>
    <property type="match status" value="1"/>
</dbReference>